<sequence>MAAITSWITDSGCKDHASLVSIAKLAEQAERYEDMAVAMKTIAEMGNELNNEERNLLSVAYKNVVGARRSSWRIMSSIAKKQAGTPLADQTDIYLKKVEEELTKICNDVLALLSKNLITEKIGAEAKIFYYKMMGDYYRYLAEVQEGEQNDKSTEAAEEAYQKATSLAEAELSVTHPIRLGLALNFSVFYYEIKNMPEKACSLAKAAFDAAITEVDSIKDETYKDSTLIMQLLRDNLTLWNSECETDS</sequence>
<name>14332_ECHMU</name>
<evidence type="ECO:0000305" key="1"/>
<reference key="1">
    <citation type="journal article" date="2004" name="Parasitol. Res.">
        <title>14-3-3 gene characterization and description of a second 14-3-3 isoform in both Echinococcus granulosus and E. multilocularis.</title>
        <authorList>
            <person name="Nunes C.P."/>
            <person name="Zaha A."/>
            <person name="Gottstein B."/>
            <person name="Muller N."/>
            <person name="Siles-Lucas M."/>
        </authorList>
    </citation>
    <scope>NUCLEOTIDE SEQUENCE [GENOMIC DNA / MRNA]</scope>
</reference>
<feature type="chain" id="PRO_0000058655" description="14-3-3 protein homolog 2">
    <location>
        <begin position="1"/>
        <end position="248"/>
    </location>
</feature>
<organism>
    <name type="scientific">Echinococcus multilocularis</name>
    <name type="common">Fox tapeworm</name>
    <dbReference type="NCBI Taxonomy" id="6211"/>
    <lineage>
        <taxon>Eukaryota</taxon>
        <taxon>Metazoa</taxon>
        <taxon>Spiralia</taxon>
        <taxon>Lophotrochozoa</taxon>
        <taxon>Platyhelminthes</taxon>
        <taxon>Cestoda</taxon>
        <taxon>Eucestoda</taxon>
        <taxon>Cyclophyllidea</taxon>
        <taxon>Taeniidae</taxon>
        <taxon>Echinococcus</taxon>
    </lineage>
</organism>
<proteinExistence type="evidence at transcript level"/>
<dbReference type="EMBL" id="AF529419">
    <property type="protein sequence ID" value="AAM94864.1"/>
    <property type="molecule type" value="mRNA"/>
</dbReference>
<dbReference type="EMBL" id="AF529420">
    <property type="protein sequence ID" value="AAM94865.1"/>
    <property type="molecule type" value="Genomic_DNA"/>
</dbReference>
<dbReference type="SMR" id="Q8MM75"/>
<dbReference type="eggNOG" id="KOG0841">
    <property type="taxonomic scope" value="Eukaryota"/>
</dbReference>
<dbReference type="CDD" id="cd08774">
    <property type="entry name" value="14-3-3"/>
    <property type="match status" value="1"/>
</dbReference>
<dbReference type="Gene3D" id="1.20.190.20">
    <property type="entry name" value="14-3-3 domain"/>
    <property type="match status" value="1"/>
</dbReference>
<dbReference type="InterPro" id="IPR000308">
    <property type="entry name" value="14-3-3"/>
</dbReference>
<dbReference type="InterPro" id="IPR023409">
    <property type="entry name" value="14-3-3_CS"/>
</dbReference>
<dbReference type="InterPro" id="IPR036815">
    <property type="entry name" value="14-3-3_dom_sf"/>
</dbReference>
<dbReference type="InterPro" id="IPR023410">
    <property type="entry name" value="14-3-3_domain"/>
</dbReference>
<dbReference type="PANTHER" id="PTHR18860">
    <property type="entry name" value="14-3-3 PROTEIN"/>
    <property type="match status" value="1"/>
</dbReference>
<dbReference type="Pfam" id="PF00244">
    <property type="entry name" value="14-3-3"/>
    <property type="match status" value="1"/>
</dbReference>
<dbReference type="PIRSF" id="PIRSF000868">
    <property type="entry name" value="14-3-3"/>
    <property type="match status" value="1"/>
</dbReference>
<dbReference type="PRINTS" id="PR00305">
    <property type="entry name" value="1433ZETA"/>
</dbReference>
<dbReference type="SMART" id="SM00101">
    <property type="entry name" value="14_3_3"/>
    <property type="match status" value="1"/>
</dbReference>
<dbReference type="SUPFAM" id="SSF48445">
    <property type="entry name" value="14-3-3 protein"/>
    <property type="match status" value="1"/>
</dbReference>
<dbReference type="PROSITE" id="PS00796">
    <property type="entry name" value="1433_1"/>
    <property type="match status" value="1"/>
</dbReference>
<dbReference type="PROSITE" id="PS00797">
    <property type="entry name" value="1433_2"/>
    <property type="match status" value="1"/>
</dbReference>
<comment type="similarity">
    <text evidence="1">Belongs to the 14-3-3 family.</text>
</comment>
<accession>Q8MM75</accession>
<protein>
    <recommendedName>
        <fullName>14-3-3 protein homolog 2</fullName>
    </recommendedName>
</protein>